<evidence type="ECO:0000255" key="1">
    <source>
        <dbReference type="HAMAP-Rule" id="MF_00004"/>
    </source>
</evidence>
<protein>
    <recommendedName>
        <fullName evidence="1">Adenine phosphoribosyltransferase</fullName>
        <shortName evidence="1">APRT</shortName>
        <ecNumber evidence="1">2.4.2.7</ecNumber>
    </recommendedName>
</protein>
<dbReference type="EC" id="2.4.2.7" evidence="1"/>
<dbReference type="EMBL" id="CR936503">
    <property type="protein sequence ID" value="CAI55580.1"/>
    <property type="molecule type" value="Genomic_DNA"/>
</dbReference>
<dbReference type="RefSeq" id="WP_011374973.1">
    <property type="nucleotide sequence ID" value="NC_007576.1"/>
</dbReference>
<dbReference type="SMR" id="Q38W53"/>
<dbReference type="STRING" id="314315.LCA_1276"/>
<dbReference type="KEGG" id="lsa:LCA_1276"/>
<dbReference type="eggNOG" id="COG0503">
    <property type="taxonomic scope" value="Bacteria"/>
</dbReference>
<dbReference type="HOGENOM" id="CLU_063339_3_0_9"/>
<dbReference type="OrthoDB" id="9803963at2"/>
<dbReference type="UniPathway" id="UPA00588">
    <property type="reaction ID" value="UER00646"/>
</dbReference>
<dbReference type="Proteomes" id="UP000002707">
    <property type="component" value="Chromosome"/>
</dbReference>
<dbReference type="GO" id="GO:0005737">
    <property type="term" value="C:cytoplasm"/>
    <property type="evidence" value="ECO:0007669"/>
    <property type="project" value="UniProtKB-SubCell"/>
</dbReference>
<dbReference type="GO" id="GO:0002055">
    <property type="term" value="F:adenine binding"/>
    <property type="evidence" value="ECO:0007669"/>
    <property type="project" value="TreeGrafter"/>
</dbReference>
<dbReference type="GO" id="GO:0003999">
    <property type="term" value="F:adenine phosphoribosyltransferase activity"/>
    <property type="evidence" value="ECO:0007669"/>
    <property type="project" value="UniProtKB-UniRule"/>
</dbReference>
<dbReference type="GO" id="GO:0016208">
    <property type="term" value="F:AMP binding"/>
    <property type="evidence" value="ECO:0007669"/>
    <property type="project" value="TreeGrafter"/>
</dbReference>
<dbReference type="GO" id="GO:0006168">
    <property type="term" value="P:adenine salvage"/>
    <property type="evidence" value="ECO:0007669"/>
    <property type="project" value="InterPro"/>
</dbReference>
<dbReference type="GO" id="GO:0044209">
    <property type="term" value="P:AMP salvage"/>
    <property type="evidence" value="ECO:0007669"/>
    <property type="project" value="UniProtKB-UniRule"/>
</dbReference>
<dbReference type="GO" id="GO:0006166">
    <property type="term" value="P:purine ribonucleoside salvage"/>
    <property type="evidence" value="ECO:0007669"/>
    <property type="project" value="UniProtKB-KW"/>
</dbReference>
<dbReference type="CDD" id="cd06223">
    <property type="entry name" value="PRTases_typeI"/>
    <property type="match status" value="1"/>
</dbReference>
<dbReference type="FunFam" id="3.40.50.2020:FF:000004">
    <property type="entry name" value="Adenine phosphoribosyltransferase"/>
    <property type="match status" value="1"/>
</dbReference>
<dbReference type="Gene3D" id="3.40.50.2020">
    <property type="match status" value="1"/>
</dbReference>
<dbReference type="HAMAP" id="MF_00004">
    <property type="entry name" value="Aden_phosphoribosyltr"/>
    <property type="match status" value="1"/>
</dbReference>
<dbReference type="InterPro" id="IPR005764">
    <property type="entry name" value="Ade_phspho_trans"/>
</dbReference>
<dbReference type="InterPro" id="IPR000836">
    <property type="entry name" value="PRibTrfase_dom"/>
</dbReference>
<dbReference type="InterPro" id="IPR029057">
    <property type="entry name" value="PRTase-like"/>
</dbReference>
<dbReference type="InterPro" id="IPR050054">
    <property type="entry name" value="UPRTase/APRTase"/>
</dbReference>
<dbReference type="NCBIfam" id="TIGR01090">
    <property type="entry name" value="apt"/>
    <property type="match status" value="1"/>
</dbReference>
<dbReference type="NCBIfam" id="NF002633">
    <property type="entry name" value="PRK02304.1-2"/>
    <property type="match status" value="1"/>
</dbReference>
<dbReference type="NCBIfam" id="NF002634">
    <property type="entry name" value="PRK02304.1-3"/>
    <property type="match status" value="1"/>
</dbReference>
<dbReference type="NCBIfam" id="NF002636">
    <property type="entry name" value="PRK02304.1-5"/>
    <property type="match status" value="1"/>
</dbReference>
<dbReference type="PANTHER" id="PTHR32315">
    <property type="entry name" value="ADENINE PHOSPHORIBOSYLTRANSFERASE"/>
    <property type="match status" value="1"/>
</dbReference>
<dbReference type="PANTHER" id="PTHR32315:SF3">
    <property type="entry name" value="ADENINE PHOSPHORIBOSYLTRANSFERASE"/>
    <property type="match status" value="1"/>
</dbReference>
<dbReference type="Pfam" id="PF00156">
    <property type="entry name" value="Pribosyltran"/>
    <property type="match status" value="1"/>
</dbReference>
<dbReference type="SUPFAM" id="SSF53271">
    <property type="entry name" value="PRTase-like"/>
    <property type="match status" value="1"/>
</dbReference>
<name>APT_LATSS</name>
<accession>Q38W53</accession>
<organism>
    <name type="scientific">Latilactobacillus sakei subsp. sakei (strain 23K)</name>
    <name type="common">Lactobacillus sakei subsp. sakei</name>
    <dbReference type="NCBI Taxonomy" id="314315"/>
    <lineage>
        <taxon>Bacteria</taxon>
        <taxon>Bacillati</taxon>
        <taxon>Bacillota</taxon>
        <taxon>Bacilli</taxon>
        <taxon>Lactobacillales</taxon>
        <taxon>Lactobacillaceae</taxon>
        <taxon>Latilactobacillus</taxon>
    </lineage>
</organism>
<sequence>MSINFKDYVASVPDFPEAGVTFRDISPLMSDGEAYAAATDKIVEYAKNKGVEMIVGPEARGFIVGCPVAYKLGVGFAPARKKGKLPRETVSASYGLEYGKSTLYMHKDAVKPGQKVLVTDDLLATGGTIAATIKMVEELGGIVVGTAFFIELKDLNGREKIKDYDIFKLMEY</sequence>
<reference key="1">
    <citation type="journal article" date="2005" name="Nat. Biotechnol.">
        <title>The complete genome sequence of the meat-borne lactic acid bacterium Lactobacillus sakei 23K.</title>
        <authorList>
            <person name="Chaillou S."/>
            <person name="Champomier-Verges M.-C."/>
            <person name="Cornet M."/>
            <person name="Crutz-Le Coq A.-M."/>
            <person name="Dudez A.-M."/>
            <person name="Martin V."/>
            <person name="Beaufils S."/>
            <person name="Darbon-Rongere E."/>
            <person name="Bossy R."/>
            <person name="Loux V."/>
            <person name="Zagorec M."/>
        </authorList>
    </citation>
    <scope>NUCLEOTIDE SEQUENCE [LARGE SCALE GENOMIC DNA]</scope>
    <source>
        <strain>23K</strain>
    </source>
</reference>
<gene>
    <name evidence="1" type="primary">apt</name>
    <name type="ordered locus">LCA_1276</name>
</gene>
<proteinExistence type="inferred from homology"/>
<keyword id="KW-0963">Cytoplasm</keyword>
<keyword id="KW-0328">Glycosyltransferase</keyword>
<keyword id="KW-0660">Purine salvage</keyword>
<keyword id="KW-1185">Reference proteome</keyword>
<keyword id="KW-0808">Transferase</keyword>
<comment type="function">
    <text evidence="1">Catalyzes a salvage reaction resulting in the formation of AMP, that is energically less costly than de novo synthesis.</text>
</comment>
<comment type="catalytic activity">
    <reaction evidence="1">
        <text>AMP + diphosphate = 5-phospho-alpha-D-ribose 1-diphosphate + adenine</text>
        <dbReference type="Rhea" id="RHEA:16609"/>
        <dbReference type="ChEBI" id="CHEBI:16708"/>
        <dbReference type="ChEBI" id="CHEBI:33019"/>
        <dbReference type="ChEBI" id="CHEBI:58017"/>
        <dbReference type="ChEBI" id="CHEBI:456215"/>
        <dbReference type="EC" id="2.4.2.7"/>
    </reaction>
</comment>
<comment type="pathway">
    <text evidence="1">Purine metabolism; AMP biosynthesis via salvage pathway; AMP from adenine: step 1/1.</text>
</comment>
<comment type="subunit">
    <text evidence="1">Homodimer.</text>
</comment>
<comment type="subcellular location">
    <subcellularLocation>
        <location evidence="1">Cytoplasm</location>
    </subcellularLocation>
</comment>
<comment type="similarity">
    <text evidence="1">Belongs to the purine/pyrimidine phosphoribosyltransferase family.</text>
</comment>
<feature type="chain" id="PRO_0000329352" description="Adenine phosphoribosyltransferase">
    <location>
        <begin position="1"/>
        <end position="172"/>
    </location>
</feature>